<organism>
    <name type="scientific">Escherichia coli O8 (strain IAI1)</name>
    <dbReference type="NCBI Taxonomy" id="585034"/>
    <lineage>
        <taxon>Bacteria</taxon>
        <taxon>Pseudomonadati</taxon>
        <taxon>Pseudomonadota</taxon>
        <taxon>Gammaproteobacteria</taxon>
        <taxon>Enterobacterales</taxon>
        <taxon>Enterobacteriaceae</taxon>
        <taxon>Escherichia</taxon>
    </lineage>
</organism>
<evidence type="ECO:0000255" key="1">
    <source>
        <dbReference type="HAMAP-Rule" id="MF_01903"/>
    </source>
</evidence>
<reference key="1">
    <citation type="journal article" date="2009" name="PLoS Genet.">
        <title>Organised genome dynamics in the Escherichia coli species results in highly diverse adaptive paths.</title>
        <authorList>
            <person name="Touchon M."/>
            <person name="Hoede C."/>
            <person name="Tenaillon O."/>
            <person name="Barbe V."/>
            <person name="Baeriswyl S."/>
            <person name="Bidet P."/>
            <person name="Bingen E."/>
            <person name="Bonacorsi S."/>
            <person name="Bouchier C."/>
            <person name="Bouvet O."/>
            <person name="Calteau A."/>
            <person name="Chiapello H."/>
            <person name="Clermont O."/>
            <person name="Cruveiller S."/>
            <person name="Danchin A."/>
            <person name="Diard M."/>
            <person name="Dossat C."/>
            <person name="Karoui M.E."/>
            <person name="Frapy E."/>
            <person name="Garry L."/>
            <person name="Ghigo J.M."/>
            <person name="Gilles A.M."/>
            <person name="Johnson J."/>
            <person name="Le Bouguenec C."/>
            <person name="Lescat M."/>
            <person name="Mangenot S."/>
            <person name="Martinez-Jehanne V."/>
            <person name="Matic I."/>
            <person name="Nassif X."/>
            <person name="Oztas S."/>
            <person name="Petit M.A."/>
            <person name="Pichon C."/>
            <person name="Rouy Z."/>
            <person name="Ruf C.S."/>
            <person name="Schneider D."/>
            <person name="Tourret J."/>
            <person name="Vacherie B."/>
            <person name="Vallenet D."/>
            <person name="Medigue C."/>
            <person name="Rocha E.P.C."/>
            <person name="Denamur E."/>
        </authorList>
    </citation>
    <scope>NUCLEOTIDE SEQUENCE [LARGE SCALE GENOMIC DNA]</scope>
    <source>
        <strain>IAI1</strain>
    </source>
</reference>
<gene>
    <name evidence="1" type="primary">gpt</name>
    <name type="ordered locus">ECIAI1_0277</name>
</gene>
<keyword id="KW-0997">Cell inner membrane</keyword>
<keyword id="KW-1003">Cell membrane</keyword>
<keyword id="KW-0328">Glycosyltransferase</keyword>
<keyword id="KW-0460">Magnesium</keyword>
<keyword id="KW-0472">Membrane</keyword>
<keyword id="KW-0479">Metal-binding</keyword>
<keyword id="KW-0660">Purine salvage</keyword>
<keyword id="KW-0808">Transferase</keyword>
<proteinExistence type="inferred from homology"/>
<feature type="chain" id="PRO_1000188743" description="Xanthine-guanine phosphoribosyltransferase">
    <location>
        <begin position="1"/>
        <end position="152"/>
    </location>
</feature>
<feature type="binding site" evidence="1">
    <location>
        <begin position="37"/>
        <end position="38"/>
    </location>
    <ligand>
        <name>5-phospho-alpha-D-ribose 1-diphosphate</name>
        <dbReference type="ChEBI" id="CHEBI:58017"/>
    </ligand>
</feature>
<feature type="binding site" evidence="1">
    <location>
        <position position="69"/>
    </location>
    <ligand>
        <name>5-phospho-alpha-D-ribose 1-diphosphate</name>
        <dbReference type="ChEBI" id="CHEBI:58017"/>
    </ligand>
</feature>
<feature type="binding site" evidence="1">
    <location>
        <position position="69"/>
    </location>
    <ligand>
        <name>GMP</name>
        <dbReference type="ChEBI" id="CHEBI:58115"/>
    </ligand>
</feature>
<feature type="binding site" evidence="1">
    <location>
        <begin position="88"/>
        <end position="96"/>
    </location>
    <ligand>
        <name>5-phospho-alpha-D-ribose 1-diphosphate</name>
        <dbReference type="ChEBI" id="CHEBI:58017"/>
    </ligand>
</feature>
<feature type="binding site" evidence="1">
    <location>
        <position position="89"/>
    </location>
    <ligand>
        <name>Mg(2+)</name>
        <dbReference type="ChEBI" id="CHEBI:18420"/>
    </ligand>
</feature>
<feature type="binding site" evidence="1">
    <location>
        <begin position="92"/>
        <end position="96"/>
    </location>
    <ligand>
        <name>GMP</name>
        <dbReference type="ChEBI" id="CHEBI:58115"/>
    </ligand>
</feature>
<feature type="binding site" evidence="1">
    <location>
        <position position="92"/>
    </location>
    <ligand>
        <name>guanine</name>
        <dbReference type="ChEBI" id="CHEBI:16235"/>
    </ligand>
</feature>
<feature type="binding site" evidence="1">
    <location>
        <position position="92"/>
    </location>
    <ligand>
        <name>xanthine</name>
        <dbReference type="ChEBI" id="CHEBI:17712"/>
    </ligand>
</feature>
<feature type="binding site" evidence="1">
    <location>
        <begin position="134"/>
        <end position="135"/>
    </location>
    <ligand>
        <name>GMP</name>
        <dbReference type="ChEBI" id="CHEBI:58115"/>
    </ligand>
</feature>
<feature type="binding site" evidence="1">
    <location>
        <position position="135"/>
    </location>
    <ligand>
        <name>guanine</name>
        <dbReference type="ChEBI" id="CHEBI:16235"/>
    </ligand>
</feature>
<feature type="binding site" evidence="1">
    <location>
        <position position="135"/>
    </location>
    <ligand>
        <name>xanthine</name>
        <dbReference type="ChEBI" id="CHEBI:17712"/>
    </ligand>
</feature>
<dbReference type="EC" id="2.4.2.-" evidence="1"/>
<dbReference type="EC" id="2.4.2.22" evidence="1"/>
<dbReference type="EMBL" id="CU928160">
    <property type="protein sequence ID" value="CAQ97151.1"/>
    <property type="molecule type" value="Genomic_DNA"/>
</dbReference>
<dbReference type="RefSeq" id="WP_001291990.1">
    <property type="nucleotide sequence ID" value="NC_011741.1"/>
</dbReference>
<dbReference type="SMR" id="B7M267"/>
<dbReference type="GeneID" id="93777155"/>
<dbReference type="KEGG" id="ecr:ECIAI1_0277"/>
<dbReference type="HOGENOM" id="CLU_080904_3_0_6"/>
<dbReference type="UniPathway" id="UPA00602">
    <property type="reaction ID" value="UER00658"/>
</dbReference>
<dbReference type="UniPathway" id="UPA00909">
    <property type="reaction ID" value="UER00887"/>
</dbReference>
<dbReference type="GO" id="GO:0005829">
    <property type="term" value="C:cytosol"/>
    <property type="evidence" value="ECO:0007669"/>
    <property type="project" value="TreeGrafter"/>
</dbReference>
<dbReference type="GO" id="GO:0005886">
    <property type="term" value="C:plasma membrane"/>
    <property type="evidence" value="ECO:0007669"/>
    <property type="project" value="UniProtKB-SubCell"/>
</dbReference>
<dbReference type="GO" id="GO:0052657">
    <property type="term" value="F:guanine phosphoribosyltransferase activity"/>
    <property type="evidence" value="ECO:0007669"/>
    <property type="project" value="RHEA"/>
</dbReference>
<dbReference type="GO" id="GO:0004422">
    <property type="term" value="F:hypoxanthine phosphoribosyltransferase activity"/>
    <property type="evidence" value="ECO:0007669"/>
    <property type="project" value="TreeGrafter"/>
</dbReference>
<dbReference type="GO" id="GO:0000287">
    <property type="term" value="F:magnesium ion binding"/>
    <property type="evidence" value="ECO:0007669"/>
    <property type="project" value="UniProtKB-UniRule"/>
</dbReference>
<dbReference type="GO" id="GO:0000310">
    <property type="term" value="F:xanthine phosphoribosyltransferase activity"/>
    <property type="evidence" value="ECO:0007669"/>
    <property type="project" value="UniProtKB-UniRule"/>
</dbReference>
<dbReference type="GO" id="GO:0032263">
    <property type="term" value="P:GMP salvage"/>
    <property type="evidence" value="ECO:0007669"/>
    <property type="project" value="UniProtKB-UniRule"/>
</dbReference>
<dbReference type="GO" id="GO:0032264">
    <property type="term" value="P:IMP salvage"/>
    <property type="evidence" value="ECO:0007669"/>
    <property type="project" value="TreeGrafter"/>
</dbReference>
<dbReference type="GO" id="GO:0006166">
    <property type="term" value="P:purine ribonucleoside salvage"/>
    <property type="evidence" value="ECO:0007669"/>
    <property type="project" value="UniProtKB-KW"/>
</dbReference>
<dbReference type="GO" id="GO:0032265">
    <property type="term" value="P:XMP salvage"/>
    <property type="evidence" value="ECO:0007669"/>
    <property type="project" value="UniProtKB-UniRule"/>
</dbReference>
<dbReference type="CDD" id="cd06223">
    <property type="entry name" value="PRTases_typeI"/>
    <property type="match status" value="1"/>
</dbReference>
<dbReference type="FunFam" id="3.40.50.2020:FF:000009">
    <property type="entry name" value="Xanthine phosphoribosyltransferase"/>
    <property type="match status" value="1"/>
</dbReference>
<dbReference type="Gene3D" id="3.40.50.2020">
    <property type="match status" value="1"/>
</dbReference>
<dbReference type="HAMAP" id="MF_01903">
    <property type="entry name" value="XGPRT"/>
    <property type="match status" value="1"/>
</dbReference>
<dbReference type="InterPro" id="IPR000836">
    <property type="entry name" value="PRibTrfase_dom"/>
</dbReference>
<dbReference type="InterPro" id="IPR029057">
    <property type="entry name" value="PRTase-like"/>
</dbReference>
<dbReference type="InterPro" id="IPR023747">
    <property type="entry name" value="Xanthine_Guanine_PRibTrfase"/>
</dbReference>
<dbReference type="NCBIfam" id="NF006613">
    <property type="entry name" value="PRK09177.1"/>
    <property type="match status" value="1"/>
</dbReference>
<dbReference type="PANTHER" id="PTHR39563">
    <property type="entry name" value="XANTHINE PHOSPHORIBOSYLTRANSFERASE"/>
    <property type="match status" value="1"/>
</dbReference>
<dbReference type="PANTHER" id="PTHR39563:SF1">
    <property type="entry name" value="XANTHINE-GUANINE PHOSPHORIBOSYLTRANSFERASE"/>
    <property type="match status" value="1"/>
</dbReference>
<dbReference type="Pfam" id="PF00156">
    <property type="entry name" value="Pribosyltran"/>
    <property type="match status" value="1"/>
</dbReference>
<dbReference type="SUPFAM" id="SSF53271">
    <property type="entry name" value="PRTase-like"/>
    <property type="match status" value="1"/>
</dbReference>
<dbReference type="PROSITE" id="PS00103">
    <property type="entry name" value="PUR_PYR_PR_TRANSFER"/>
    <property type="match status" value="1"/>
</dbReference>
<name>XGPT_ECO8A</name>
<protein>
    <recommendedName>
        <fullName evidence="1">Xanthine-guanine phosphoribosyltransferase</fullName>
        <shortName evidence="1">XGPRT</shortName>
        <ecNumber evidence="1">2.4.2.-</ecNumber>
        <ecNumber evidence="1">2.4.2.22</ecNumber>
    </recommendedName>
    <alternativeName>
        <fullName evidence="1">Xanthine phosphoribosyltransferase</fullName>
    </alternativeName>
</protein>
<sequence>MSEKYIVTWDMLQIHARKLASRLMPSEQWKGIIAVSRGGLVPGALLARELGIRHVDTVCISSYDHDNQRELKVLKRAEGDGEGFIVIDDLVDTGGTAVAIREMYPKAHFVTIFAKPAGRPLVDDYVVDIPQDTWIEQPWDMGVVFVPPISGR</sequence>
<comment type="function">
    <text evidence="1">Purine salvage pathway enzyme that catalyzes the transfer of the ribosyl-5-phosphate group from 5-phospho-alpha-D-ribose 1-diphosphate (PRPP) to the N9 position of the 6-oxopurines guanine and xanthine to form the corresponding ribonucleotides GMP (guanosine 5'-monophosphate) and XMP (xanthosine 5'-monophosphate), with the release of PPi. To a lesser extent, also acts on hypoxanthine.</text>
</comment>
<comment type="catalytic activity">
    <reaction evidence="1">
        <text>GMP + diphosphate = guanine + 5-phospho-alpha-D-ribose 1-diphosphate</text>
        <dbReference type="Rhea" id="RHEA:25424"/>
        <dbReference type="ChEBI" id="CHEBI:16235"/>
        <dbReference type="ChEBI" id="CHEBI:33019"/>
        <dbReference type="ChEBI" id="CHEBI:58017"/>
        <dbReference type="ChEBI" id="CHEBI:58115"/>
    </reaction>
    <physiologicalReaction direction="right-to-left" evidence="1">
        <dbReference type="Rhea" id="RHEA:25426"/>
    </physiologicalReaction>
</comment>
<comment type="catalytic activity">
    <reaction evidence="1">
        <text>XMP + diphosphate = xanthine + 5-phospho-alpha-D-ribose 1-diphosphate</text>
        <dbReference type="Rhea" id="RHEA:10800"/>
        <dbReference type="ChEBI" id="CHEBI:17712"/>
        <dbReference type="ChEBI" id="CHEBI:33019"/>
        <dbReference type="ChEBI" id="CHEBI:57464"/>
        <dbReference type="ChEBI" id="CHEBI:58017"/>
        <dbReference type="EC" id="2.4.2.22"/>
    </reaction>
    <physiologicalReaction direction="right-to-left" evidence="1">
        <dbReference type="Rhea" id="RHEA:10802"/>
    </physiologicalReaction>
</comment>
<comment type="catalytic activity">
    <reaction evidence="1">
        <text>IMP + diphosphate = hypoxanthine + 5-phospho-alpha-D-ribose 1-diphosphate</text>
        <dbReference type="Rhea" id="RHEA:17973"/>
        <dbReference type="ChEBI" id="CHEBI:17368"/>
        <dbReference type="ChEBI" id="CHEBI:33019"/>
        <dbReference type="ChEBI" id="CHEBI:58017"/>
        <dbReference type="ChEBI" id="CHEBI:58053"/>
    </reaction>
    <physiologicalReaction direction="right-to-left" evidence="1">
        <dbReference type="Rhea" id="RHEA:17975"/>
    </physiologicalReaction>
</comment>
<comment type="cofactor">
    <cofactor evidence="1">
        <name>Mg(2+)</name>
        <dbReference type="ChEBI" id="CHEBI:18420"/>
    </cofactor>
</comment>
<comment type="pathway">
    <text evidence="1">Purine metabolism; GMP biosynthesis via salvage pathway; GMP from guanine: step 1/1.</text>
</comment>
<comment type="pathway">
    <text evidence="1">Purine metabolism; XMP biosynthesis via salvage pathway; XMP from xanthine: step 1/1.</text>
</comment>
<comment type="subunit">
    <text evidence="1">Homotetramer.</text>
</comment>
<comment type="subcellular location">
    <subcellularLocation>
        <location evidence="1">Cell inner membrane</location>
        <topology evidence="1">Peripheral membrane protein</topology>
    </subcellularLocation>
</comment>
<comment type="similarity">
    <text evidence="1">Belongs to the purine/pyrimidine phosphoribosyltransferase family. XGPT subfamily.</text>
</comment>
<accession>B7M267</accession>